<protein>
    <recommendedName>
        <fullName evidence="1">Dual-specificity RNA methyltransferase RlmN</fullName>
        <ecNumber evidence="1">2.1.1.192</ecNumber>
    </recommendedName>
    <alternativeName>
        <fullName evidence="1">23S rRNA (adenine(2503)-C(2))-methyltransferase</fullName>
    </alternativeName>
    <alternativeName>
        <fullName evidence="1">23S rRNA m2A2503 methyltransferase</fullName>
    </alternativeName>
    <alternativeName>
        <fullName evidence="1">Ribosomal RNA large subunit methyltransferase N</fullName>
    </alternativeName>
    <alternativeName>
        <fullName evidence="1">tRNA (adenine(37)-C(2))-methyltransferase</fullName>
    </alternativeName>
    <alternativeName>
        <fullName evidence="1">tRNA m2A37 methyltransferase</fullName>
    </alternativeName>
</protein>
<reference key="1">
    <citation type="journal article" date="2009" name="Infect. Immun.">
        <title>Comparative genomics reveal extensive transposon-mediated genomic plasticity and diversity among potential effector proteins within the genus Coxiella.</title>
        <authorList>
            <person name="Beare P.A."/>
            <person name="Unsworth N."/>
            <person name="Andoh M."/>
            <person name="Voth D.E."/>
            <person name="Omsland A."/>
            <person name="Gilk S.D."/>
            <person name="Williams K.P."/>
            <person name="Sobral B.W."/>
            <person name="Kupko J.J. III"/>
            <person name="Porcella S.F."/>
            <person name="Samuel J.E."/>
            <person name="Heinzen R.A."/>
        </authorList>
    </citation>
    <scope>NUCLEOTIDE SEQUENCE [LARGE SCALE GENOMIC DNA]</scope>
    <source>
        <strain>CbuK_Q154</strain>
    </source>
</reference>
<name>RLMN_COXB1</name>
<feature type="chain" id="PRO_1000188562" description="Dual-specificity RNA methyltransferase RlmN">
    <location>
        <begin position="1"/>
        <end position="370"/>
    </location>
</feature>
<feature type="domain" description="Radical SAM core" evidence="2">
    <location>
        <begin position="99"/>
        <end position="331"/>
    </location>
</feature>
<feature type="active site" description="Proton acceptor" evidence="1">
    <location>
        <position position="93"/>
    </location>
</feature>
<feature type="active site" description="S-methylcysteine intermediate" evidence="1">
    <location>
        <position position="336"/>
    </location>
</feature>
<feature type="binding site" evidence="1">
    <location>
        <position position="113"/>
    </location>
    <ligand>
        <name>[4Fe-4S] cluster</name>
        <dbReference type="ChEBI" id="CHEBI:49883"/>
        <note>4Fe-4S-S-AdoMet</note>
    </ligand>
</feature>
<feature type="binding site" evidence="1">
    <location>
        <position position="117"/>
    </location>
    <ligand>
        <name>[4Fe-4S] cluster</name>
        <dbReference type="ChEBI" id="CHEBI:49883"/>
        <note>4Fe-4S-S-AdoMet</note>
    </ligand>
</feature>
<feature type="binding site" evidence="1">
    <location>
        <position position="120"/>
    </location>
    <ligand>
        <name>[4Fe-4S] cluster</name>
        <dbReference type="ChEBI" id="CHEBI:49883"/>
        <note>4Fe-4S-S-AdoMet</note>
    </ligand>
</feature>
<feature type="binding site" evidence="1">
    <location>
        <begin position="162"/>
        <end position="163"/>
    </location>
    <ligand>
        <name>S-adenosyl-L-methionine</name>
        <dbReference type="ChEBI" id="CHEBI:59789"/>
    </ligand>
</feature>
<feature type="binding site" evidence="1">
    <location>
        <position position="194"/>
    </location>
    <ligand>
        <name>S-adenosyl-L-methionine</name>
        <dbReference type="ChEBI" id="CHEBI:59789"/>
    </ligand>
</feature>
<feature type="binding site" evidence="1">
    <location>
        <begin position="216"/>
        <end position="218"/>
    </location>
    <ligand>
        <name>S-adenosyl-L-methionine</name>
        <dbReference type="ChEBI" id="CHEBI:59789"/>
    </ligand>
</feature>
<feature type="binding site" evidence="1">
    <location>
        <position position="293"/>
    </location>
    <ligand>
        <name>S-adenosyl-L-methionine</name>
        <dbReference type="ChEBI" id="CHEBI:59789"/>
    </ligand>
</feature>
<feature type="disulfide bond" description="(transient)" evidence="1">
    <location>
        <begin position="106"/>
        <end position="336"/>
    </location>
</feature>
<evidence type="ECO:0000255" key="1">
    <source>
        <dbReference type="HAMAP-Rule" id="MF_01849"/>
    </source>
</evidence>
<evidence type="ECO:0000255" key="2">
    <source>
        <dbReference type="PROSITE-ProRule" id="PRU01266"/>
    </source>
</evidence>
<organism>
    <name type="scientific">Coxiella burnetii (strain CbuK_Q154)</name>
    <name type="common">Coxiella burnetii (strain Q154)</name>
    <dbReference type="NCBI Taxonomy" id="434924"/>
    <lineage>
        <taxon>Bacteria</taxon>
        <taxon>Pseudomonadati</taxon>
        <taxon>Pseudomonadota</taxon>
        <taxon>Gammaproteobacteria</taxon>
        <taxon>Legionellales</taxon>
        <taxon>Coxiellaceae</taxon>
        <taxon>Coxiella</taxon>
    </lineage>
</organism>
<gene>
    <name evidence="1" type="primary">rlmN</name>
    <name type="ordered locus">CbuK_1112</name>
</gene>
<proteinExistence type="inferred from homology"/>
<dbReference type="EC" id="2.1.1.192" evidence="1"/>
<dbReference type="EMBL" id="CP001020">
    <property type="protein sequence ID" value="ACJ20308.1"/>
    <property type="molecule type" value="Genomic_DNA"/>
</dbReference>
<dbReference type="RefSeq" id="WP_005770814.1">
    <property type="nucleotide sequence ID" value="NC_011528.1"/>
</dbReference>
<dbReference type="SMR" id="B6J7Q9"/>
<dbReference type="KEGG" id="cbc:CbuK_1112"/>
<dbReference type="HOGENOM" id="CLU_029101_0_0_6"/>
<dbReference type="GO" id="GO:0005737">
    <property type="term" value="C:cytoplasm"/>
    <property type="evidence" value="ECO:0007669"/>
    <property type="project" value="UniProtKB-SubCell"/>
</dbReference>
<dbReference type="GO" id="GO:0051539">
    <property type="term" value="F:4 iron, 4 sulfur cluster binding"/>
    <property type="evidence" value="ECO:0007669"/>
    <property type="project" value="UniProtKB-UniRule"/>
</dbReference>
<dbReference type="GO" id="GO:0046872">
    <property type="term" value="F:metal ion binding"/>
    <property type="evidence" value="ECO:0007669"/>
    <property type="project" value="UniProtKB-KW"/>
</dbReference>
<dbReference type="GO" id="GO:0070040">
    <property type="term" value="F:rRNA (adenine(2503)-C2-)-methyltransferase activity"/>
    <property type="evidence" value="ECO:0007669"/>
    <property type="project" value="UniProtKB-UniRule"/>
</dbReference>
<dbReference type="GO" id="GO:0019843">
    <property type="term" value="F:rRNA binding"/>
    <property type="evidence" value="ECO:0007669"/>
    <property type="project" value="UniProtKB-UniRule"/>
</dbReference>
<dbReference type="GO" id="GO:0002935">
    <property type="term" value="F:tRNA (adenine(37)-C2)-methyltransferase activity"/>
    <property type="evidence" value="ECO:0007669"/>
    <property type="project" value="UniProtKB-UniRule"/>
</dbReference>
<dbReference type="GO" id="GO:0000049">
    <property type="term" value="F:tRNA binding"/>
    <property type="evidence" value="ECO:0007669"/>
    <property type="project" value="UniProtKB-UniRule"/>
</dbReference>
<dbReference type="GO" id="GO:0070475">
    <property type="term" value="P:rRNA base methylation"/>
    <property type="evidence" value="ECO:0007669"/>
    <property type="project" value="UniProtKB-UniRule"/>
</dbReference>
<dbReference type="GO" id="GO:0030488">
    <property type="term" value="P:tRNA methylation"/>
    <property type="evidence" value="ECO:0007669"/>
    <property type="project" value="UniProtKB-UniRule"/>
</dbReference>
<dbReference type="CDD" id="cd01335">
    <property type="entry name" value="Radical_SAM"/>
    <property type="match status" value="1"/>
</dbReference>
<dbReference type="FunFam" id="1.10.150.530:FF:000003">
    <property type="entry name" value="Dual-specificity RNA methyltransferase RlmN"/>
    <property type="match status" value="1"/>
</dbReference>
<dbReference type="FunFam" id="3.20.20.70:FF:000008">
    <property type="entry name" value="Dual-specificity RNA methyltransferase RlmN"/>
    <property type="match status" value="1"/>
</dbReference>
<dbReference type="Gene3D" id="1.10.150.530">
    <property type="match status" value="1"/>
</dbReference>
<dbReference type="Gene3D" id="3.20.20.70">
    <property type="entry name" value="Aldolase class I"/>
    <property type="match status" value="1"/>
</dbReference>
<dbReference type="HAMAP" id="MF_01849">
    <property type="entry name" value="RNA_methyltr_RlmN"/>
    <property type="match status" value="1"/>
</dbReference>
<dbReference type="InterPro" id="IPR013785">
    <property type="entry name" value="Aldolase_TIM"/>
</dbReference>
<dbReference type="InterPro" id="IPR040072">
    <property type="entry name" value="Methyltransferase_A"/>
</dbReference>
<dbReference type="InterPro" id="IPR048641">
    <property type="entry name" value="RlmN_N"/>
</dbReference>
<dbReference type="InterPro" id="IPR027492">
    <property type="entry name" value="RNA_MTrfase_RlmN"/>
</dbReference>
<dbReference type="InterPro" id="IPR004383">
    <property type="entry name" value="rRNA_lsu_MTrfase_RlmN/Cfr"/>
</dbReference>
<dbReference type="InterPro" id="IPR007197">
    <property type="entry name" value="rSAM"/>
</dbReference>
<dbReference type="NCBIfam" id="TIGR00048">
    <property type="entry name" value="rRNA_mod_RlmN"/>
    <property type="match status" value="1"/>
</dbReference>
<dbReference type="PANTHER" id="PTHR30544">
    <property type="entry name" value="23S RRNA METHYLTRANSFERASE"/>
    <property type="match status" value="1"/>
</dbReference>
<dbReference type="PANTHER" id="PTHR30544:SF5">
    <property type="entry name" value="RADICAL SAM CORE DOMAIN-CONTAINING PROTEIN"/>
    <property type="match status" value="1"/>
</dbReference>
<dbReference type="Pfam" id="PF04055">
    <property type="entry name" value="Radical_SAM"/>
    <property type="match status" value="1"/>
</dbReference>
<dbReference type="Pfam" id="PF21016">
    <property type="entry name" value="RlmN_N"/>
    <property type="match status" value="1"/>
</dbReference>
<dbReference type="PIRSF" id="PIRSF006004">
    <property type="entry name" value="CHP00048"/>
    <property type="match status" value="1"/>
</dbReference>
<dbReference type="SFLD" id="SFLDF00275">
    <property type="entry name" value="adenosine_C2_methyltransferase"/>
    <property type="match status" value="1"/>
</dbReference>
<dbReference type="SFLD" id="SFLDS00029">
    <property type="entry name" value="Radical_SAM"/>
    <property type="match status" value="1"/>
</dbReference>
<dbReference type="SUPFAM" id="SSF102114">
    <property type="entry name" value="Radical SAM enzymes"/>
    <property type="match status" value="1"/>
</dbReference>
<dbReference type="PROSITE" id="PS51918">
    <property type="entry name" value="RADICAL_SAM"/>
    <property type="match status" value="1"/>
</dbReference>
<sequence>MTEKINLLNLSETELQGFIASQGQPLYRATQLLQWIHQRGVTDFSLMTDLSKPFRQQLSEASFVRVPELALERVSADGTHKWLFRLADNNKIETVFIPDRKRGTLCVSSQVGCALNCSFCATGKEGFNRNLTLAEIIGQVWLAARLLKSPYKITNVVMMGMGEPLLNYEAVVAAMHLMMHDHAYGLSKYRVTLSTSGVIPAMRRLREESPVSLAVSLHAPNDALRNVLIPLNKKYSLDQLIPLCRDYYSRGSKRCVTFEYVMIEGMNDRLIDAKQLIRLLADVPCKINLIPFNSFQGTAYRCSTESAISVFQKCLMDAGFNTRVRRTRGDDIAGACGQLAGQFHDRTGRHQRWVQKQGHDFNRPIPAIDH</sequence>
<keyword id="KW-0004">4Fe-4S</keyword>
<keyword id="KW-0963">Cytoplasm</keyword>
<keyword id="KW-1015">Disulfide bond</keyword>
<keyword id="KW-0408">Iron</keyword>
<keyword id="KW-0411">Iron-sulfur</keyword>
<keyword id="KW-0479">Metal-binding</keyword>
<keyword id="KW-0489">Methyltransferase</keyword>
<keyword id="KW-0698">rRNA processing</keyword>
<keyword id="KW-0949">S-adenosyl-L-methionine</keyword>
<keyword id="KW-0808">Transferase</keyword>
<keyword id="KW-0819">tRNA processing</keyword>
<comment type="function">
    <text evidence="1">Specifically methylates position 2 of adenine 2503 in 23S rRNA and position 2 of adenine 37 in tRNAs. m2A2503 modification seems to play a crucial role in the proofreading step occurring at the peptidyl transferase center and thus would serve to optimize ribosomal fidelity.</text>
</comment>
<comment type="catalytic activity">
    <reaction evidence="1">
        <text>adenosine(2503) in 23S rRNA + 2 reduced [2Fe-2S]-[ferredoxin] + 2 S-adenosyl-L-methionine = 2-methyladenosine(2503) in 23S rRNA + 5'-deoxyadenosine + L-methionine + 2 oxidized [2Fe-2S]-[ferredoxin] + S-adenosyl-L-homocysteine</text>
        <dbReference type="Rhea" id="RHEA:42916"/>
        <dbReference type="Rhea" id="RHEA-COMP:10000"/>
        <dbReference type="Rhea" id="RHEA-COMP:10001"/>
        <dbReference type="Rhea" id="RHEA-COMP:10152"/>
        <dbReference type="Rhea" id="RHEA-COMP:10282"/>
        <dbReference type="ChEBI" id="CHEBI:17319"/>
        <dbReference type="ChEBI" id="CHEBI:33737"/>
        <dbReference type="ChEBI" id="CHEBI:33738"/>
        <dbReference type="ChEBI" id="CHEBI:57844"/>
        <dbReference type="ChEBI" id="CHEBI:57856"/>
        <dbReference type="ChEBI" id="CHEBI:59789"/>
        <dbReference type="ChEBI" id="CHEBI:74411"/>
        <dbReference type="ChEBI" id="CHEBI:74497"/>
        <dbReference type="EC" id="2.1.1.192"/>
    </reaction>
</comment>
<comment type="catalytic activity">
    <reaction evidence="1">
        <text>adenosine(37) in tRNA + 2 reduced [2Fe-2S]-[ferredoxin] + 2 S-adenosyl-L-methionine = 2-methyladenosine(37) in tRNA + 5'-deoxyadenosine + L-methionine + 2 oxidized [2Fe-2S]-[ferredoxin] + S-adenosyl-L-homocysteine</text>
        <dbReference type="Rhea" id="RHEA:43332"/>
        <dbReference type="Rhea" id="RHEA-COMP:10000"/>
        <dbReference type="Rhea" id="RHEA-COMP:10001"/>
        <dbReference type="Rhea" id="RHEA-COMP:10162"/>
        <dbReference type="Rhea" id="RHEA-COMP:10485"/>
        <dbReference type="ChEBI" id="CHEBI:17319"/>
        <dbReference type="ChEBI" id="CHEBI:33737"/>
        <dbReference type="ChEBI" id="CHEBI:33738"/>
        <dbReference type="ChEBI" id="CHEBI:57844"/>
        <dbReference type="ChEBI" id="CHEBI:57856"/>
        <dbReference type="ChEBI" id="CHEBI:59789"/>
        <dbReference type="ChEBI" id="CHEBI:74411"/>
        <dbReference type="ChEBI" id="CHEBI:74497"/>
        <dbReference type="EC" id="2.1.1.192"/>
    </reaction>
</comment>
<comment type="cofactor">
    <cofactor evidence="1">
        <name>[4Fe-4S] cluster</name>
        <dbReference type="ChEBI" id="CHEBI:49883"/>
    </cofactor>
    <text evidence="1">Binds 1 [4Fe-4S] cluster. The cluster is coordinated with 3 cysteines and an exchangeable S-adenosyl-L-methionine.</text>
</comment>
<comment type="subcellular location">
    <subcellularLocation>
        <location evidence="1">Cytoplasm</location>
    </subcellularLocation>
</comment>
<comment type="miscellaneous">
    <text evidence="1">Reaction proceeds by a ping-pong mechanism involving intermediate methylation of a conserved cysteine residue.</text>
</comment>
<comment type="similarity">
    <text evidence="1">Belongs to the radical SAM superfamily. RlmN family.</text>
</comment>
<accession>B6J7Q9</accession>